<sequence length="647" mass="72217">MSSSSSSLAAAAARKRALTEQRFSELSPALSPEVVKALKGGGFRRCTPVQAAAIPLLLSHKDVAVDAATGSGKTLAFVVPVVEILRRRPSPPKPHEVLGIIISPTRELSSQIYNVAQPFFATLKGVSSMLLVGGFDIKAELKKLEEEGANILVGTPGKLFDVMERLDTLNYKNLEILILDEADRLLDLGFQKQITSIISKLPKLRRTGLFSATQTEAVKELAKAGLRNPVRVEVKTEVKPTGKDGAQQELGPSKTPLGLRLEYMICEASNKSSQLVDFLVQNNGKKIMVYFATCACVDYWAIVLPLLDSLKGSPIIPYHGKMKQGPREKALASFSALSSGILVCTDVAARGLDIPHVDLIVQYDPPQDPNVFIHRAGRTARYDQEGDAIVFLLPKEDTYVEFLKRRGVPLTERECSTNAVDIVPQIRSAALEDRNVMEKGLTAFVSFVRAYKEHHCSYIFSWKDLEIGRLGMEYGLLQIPSMPEVKHHSLSLEGFTPVKDVDVTKIKYKDKAREKQRQKTLKRKAEELALRPEIEKRRKAPEKPEKPKRKKTGKQRQAVQTKEDMDELANEYRLLKKLKRGVIDEDEYEKLTGFGESDDDDSSDGGDSDLDERKERGNKVLKKIKQKGKAKGSRRFEGRSKQKTRRR</sequence>
<proteinExistence type="evidence at protein level"/>
<feature type="chain" id="PRO_0000282508" description="DEAD-box ATP-dependent RNA helicase 18">
    <location>
        <begin position="1"/>
        <end position="647"/>
    </location>
</feature>
<feature type="domain" description="Helicase ATP-binding" evidence="2">
    <location>
        <begin position="54"/>
        <end position="232"/>
    </location>
</feature>
<feature type="domain" description="Helicase C-terminal" evidence="3">
    <location>
        <begin position="274"/>
        <end position="430"/>
    </location>
</feature>
<feature type="region of interest" description="Disordered" evidence="4">
    <location>
        <begin position="512"/>
        <end position="565"/>
    </location>
</feature>
<feature type="region of interest" description="Disordered" evidence="4">
    <location>
        <begin position="590"/>
        <end position="647"/>
    </location>
</feature>
<feature type="coiled-coil region" evidence="1">
    <location>
        <begin position="507"/>
        <end position="582"/>
    </location>
</feature>
<feature type="short sequence motif" description="Q motif">
    <location>
        <begin position="23"/>
        <end position="51"/>
    </location>
</feature>
<feature type="short sequence motif" description="DEAD box">
    <location>
        <begin position="180"/>
        <end position="183"/>
    </location>
</feature>
<feature type="compositionally biased region" description="Basic and acidic residues" evidence="4">
    <location>
        <begin position="512"/>
        <end position="545"/>
    </location>
</feature>
<feature type="compositionally biased region" description="Acidic residues" evidence="4">
    <location>
        <begin position="596"/>
        <end position="610"/>
    </location>
</feature>
<feature type="compositionally biased region" description="Basic residues" evidence="4">
    <location>
        <begin position="619"/>
        <end position="633"/>
    </location>
</feature>
<feature type="binding site" evidence="2">
    <location>
        <begin position="67"/>
        <end position="74"/>
    </location>
    <ligand>
        <name>ATP</name>
        <dbReference type="ChEBI" id="CHEBI:30616"/>
    </ligand>
</feature>
<dbReference type="EC" id="3.6.4.13"/>
<dbReference type="EMBL" id="AP003209">
    <property type="protein sequence ID" value="BAC00580.1"/>
    <property type="molecule type" value="Genomic_DNA"/>
</dbReference>
<dbReference type="EMBL" id="AP003301">
    <property type="protein sequence ID" value="BAB64789.1"/>
    <property type="molecule type" value="Genomic_DNA"/>
</dbReference>
<dbReference type="EMBL" id="AP008207">
    <property type="protein sequence ID" value="BAF04016.1"/>
    <property type="molecule type" value="Genomic_DNA"/>
</dbReference>
<dbReference type="EMBL" id="AP014957">
    <property type="protein sequence ID" value="BAS70556.1"/>
    <property type="molecule type" value="Genomic_DNA"/>
</dbReference>
<dbReference type="EMBL" id="CM000138">
    <property type="protein sequence ID" value="EAZ10665.1"/>
    <property type="molecule type" value="Genomic_DNA"/>
</dbReference>
<dbReference type="EMBL" id="AK068747">
    <property type="protein sequence ID" value="BAG91064.1"/>
    <property type="molecule type" value="mRNA"/>
</dbReference>
<dbReference type="EMBL" id="AK103737">
    <property type="protein sequence ID" value="BAG96235.1"/>
    <property type="molecule type" value="mRNA"/>
</dbReference>
<dbReference type="EMBL" id="AB118002">
    <property type="protein sequence ID" value="BAD11343.1"/>
    <property type="molecule type" value="mRNA"/>
</dbReference>
<dbReference type="RefSeq" id="XP_015620894.1">
    <property type="nucleotide sequence ID" value="XM_015765408.1"/>
</dbReference>
<dbReference type="SMR" id="Q761Z9"/>
<dbReference type="FunCoup" id="Q761Z9">
    <property type="interactions" value="2956"/>
</dbReference>
<dbReference type="STRING" id="39947.Q761Z9"/>
<dbReference type="PaxDb" id="39947-Q761Z9"/>
<dbReference type="EnsemblPlants" id="Os01t0164500-01">
    <property type="protein sequence ID" value="Os01t0164500-01"/>
    <property type="gene ID" value="Os01g0164500"/>
</dbReference>
<dbReference type="Gramene" id="Os01t0164500-01">
    <property type="protein sequence ID" value="Os01t0164500-01"/>
    <property type="gene ID" value="Os01g0164500"/>
</dbReference>
<dbReference type="KEGG" id="dosa:Os01g0164500"/>
<dbReference type="eggNOG" id="KOG0345">
    <property type="taxonomic scope" value="Eukaryota"/>
</dbReference>
<dbReference type="HOGENOM" id="CLU_003041_26_4_1"/>
<dbReference type="InParanoid" id="Q761Z9"/>
<dbReference type="OMA" id="AYKEHEC"/>
<dbReference type="OrthoDB" id="7396459at2759"/>
<dbReference type="Proteomes" id="UP000000763">
    <property type="component" value="Chromosome 1"/>
</dbReference>
<dbReference type="Proteomes" id="UP000007752">
    <property type="component" value="Chromosome 1"/>
</dbReference>
<dbReference type="Proteomes" id="UP000059680">
    <property type="component" value="Chromosome 1"/>
</dbReference>
<dbReference type="GO" id="GO:0005730">
    <property type="term" value="C:nucleolus"/>
    <property type="evidence" value="ECO:0000318"/>
    <property type="project" value="GO_Central"/>
</dbReference>
<dbReference type="GO" id="GO:0005524">
    <property type="term" value="F:ATP binding"/>
    <property type="evidence" value="ECO:0007669"/>
    <property type="project" value="UniProtKB-KW"/>
</dbReference>
<dbReference type="GO" id="GO:0016887">
    <property type="term" value="F:ATP hydrolysis activity"/>
    <property type="evidence" value="ECO:0007669"/>
    <property type="project" value="RHEA"/>
</dbReference>
<dbReference type="GO" id="GO:0003723">
    <property type="term" value="F:RNA binding"/>
    <property type="evidence" value="ECO:0007669"/>
    <property type="project" value="UniProtKB-KW"/>
</dbReference>
<dbReference type="GO" id="GO:0003724">
    <property type="term" value="F:RNA helicase activity"/>
    <property type="evidence" value="ECO:0007669"/>
    <property type="project" value="UniProtKB-EC"/>
</dbReference>
<dbReference type="CDD" id="cd17960">
    <property type="entry name" value="DEADc_DDX55"/>
    <property type="match status" value="1"/>
</dbReference>
<dbReference type="CDD" id="cd18787">
    <property type="entry name" value="SF2_C_DEAD"/>
    <property type="match status" value="1"/>
</dbReference>
<dbReference type="FunFam" id="3.40.50.300:FF:000877">
    <property type="entry name" value="RNA helicase"/>
    <property type="match status" value="1"/>
</dbReference>
<dbReference type="Gene3D" id="3.40.50.300">
    <property type="entry name" value="P-loop containing nucleotide triphosphate hydrolases"/>
    <property type="match status" value="2"/>
</dbReference>
<dbReference type="InterPro" id="IPR011545">
    <property type="entry name" value="DEAD/DEAH_box_helicase_dom"/>
</dbReference>
<dbReference type="InterPro" id="IPR050079">
    <property type="entry name" value="DEAD_box_RNA_helicase"/>
</dbReference>
<dbReference type="InterPro" id="IPR014001">
    <property type="entry name" value="Helicase_ATP-bd"/>
</dbReference>
<dbReference type="InterPro" id="IPR001650">
    <property type="entry name" value="Helicase_C-like"/>
</dbReference>
<dbReference type="InterPro" id="IPR027417">
    <property type="entry name" value="P-loop_NTPase"/>
</dbReference>
<dbReference type="InterPro" id="IPR000629">
    <property type="entry name" value="RNA-helicase_DEAD-box_CS"/>
</dbReference>
<dbReference type="InterPro" id="IPR014014">
    <property type="entry name" value="RNA_helicase_DEAD_Q_motif"/>
</dbReference>
<dbReference type="InterPro" id="IPR025313">
    <property type="entry name" value="SPB4-like_CTE"/>
</dbReference>
<dbReference type="PANTHER" id="PTHR47959:SF1">
    <property type="entry name" value="ATP-DEPENDENT RNA HELICASE DBPA"/>
    <property type="match status" value="1"/>
</dbReference>
<dbReference type="PANTHER" id="PTHR47959">
    <property type="entry name" value="ATP-DEPENDENT RNA HELICASE RHLE-RELATED"/>
    <property type="match status" value="1"/>
</dbReference>
<dbReference type="Pfam" id="PF13959">
    <property type="entry name" value="CTE_SPB4"/>
    <property type="match status" value="1"/>
</dbReference>
<dbReference type="Pfam" id="PF00270">
    <property type="entry name" value="DEAD"/>
    <property type="match status" value="1"/>
</dbReference>
<dbReference type="Pfam" id="PF00271">
    <property type="entry name" value="Helicase_C"/>
    <property type="match status" value="1"/>
</dbReference>
<dbReference type="SMART" id="SM00487">
    <property type="entry name" value="DEXDc"/>
    <property type="match status" value="1"/>
</dbReference>
<dbReference type="SMART" id="SM01178">
    <property type="entry name" value="DUF4217"/>
    <property type="match status" value="1"/>
</dbReference>
<dbReference type="SMART" id="SM00490">
    <property type="entry name" value="HELICc"/>
    <property type="match status" value="1"/>
</dbReference>
<dbReference type="SUPFAM" id="SSF52540">
    <property type="entry name" value="P-loop containing nucleoside triphosphate hydrolases"/>
    <property type="match status" value="1"/>
</dbReference>
<dbReference type="PROSITE" id="PS00039">
    <property type="entry name" value="DEAD_ATP_HELICASE"/>
    <property type="match status" value="1"/>
</dbReference>
<dbReference type="PROSITE" id="PS51192">
    <property type="entry name" value="HELICASE_ATP_BIND_1"/>
    <property type="match status" value="1"/>
</dbReference>
<dbReference type="PROSITE" id="PS51194">
    <property type="entry name" value="HELICASE_CTER"/>
    <property type="match status" value="1"/>
</dbReference>
<dbReference type="PROSITE" id="PS51195">
    <property type="entry name" value="Q_MOTIF"/>
    <property type="match status" value="1"/>
</dbReference>
<organism>
    <name type="scientific">Oryza sativa subsp. japonica</name>
    <name type="common">Rice</name>
    <dbReference type="NCBI Taxonomy" id="39947"/>
    <lineage>
        <taxon>Eukaryota</taxon>
        <taxon>Viridiplantae</taxon>
        <taxon>Streptophyta</taxon>
        <taxon>Embryophyta</taxon>
        <taxon>Tracheophyta</taxon>
        <taxon>Spermatophyta</taxon>
        <taxon>Magnoliopsida</taxon>
        <taxon>Liliopsida</taxon>
        <taxon>Poales</taxon>
        <taxon>Poaceae</taxon>
        <taxon>BOP clade</taxon>
        <taxon>Oryzoideae</taxon>
        <taxon>Oryzeae</taxon>
        <taxon>Oryzinae</taxon>
        <taxon>Oryza</taxon>
        <taxon>Oryza sativa</taxon>
    </lineage>
</organism>
<name>RH18_ORYSJ</name>
<reference key="1">
    <citation type="journal article" date="2002" name="Nature">
        <title>The genome sequence and structure of rice chromosome 1.</title>
        <authorList>
            <person name="Sasaki T."/>
            <person name="Matsumoto T."/>
            <person name="Yamamoto K."/>
            <person name="Sakata K."/>
            <person name="Baba T."/>
            <person name="Katayose Y."/>
            <person name="Wu J."/>
            <person name="Niimura Y."/>
            <person name="Cheng Z."/>
            <person name="Nagamura Y."/>
            <person name="Antonio B.A."/>
            <person name="Kanamori H."/>
            <person name="Hosokawa S."/>
            <person name="Masukawa M."/>
            <person name="Arikawa K."/>
            <person name="Chiden Y."/>
            <person name="Hayashi M."/>
            <person name="Okamoto M."/>
            <person name="Ando T."/>
            <person name="Aoki H."/>
            <person name="Arita K."/>
            <person name="Hamada M."/>
            <person name="Harada C."/>
            <person name="Hijishita S."/>
            <person name="Honda M."/>
            <person name="Ichikawa Y."/>
            <person name="Idonuma A."/>
            <person name="Iijima M."/>
            <person name="Ikeda M."/>
            <person name="Ikeno M."/>
            <person name="Ito S."/>
            <person name="Ito T."/>
            <person name="Ito Y."/>
            <person name="Ito Y."/>
            <person name="Iwabuchi A."/>
            <person name="Kamiya K."/>
            <person name="Karasawa W."/>
            <person name="Katagiri S."/>
            <person name="Kikuta A."/>
            <person name="Kobayashi N."/>
            <person name="Kono I."/>
            <person name="Machita K."/>
            <person name="Maehara T."/>
            <person name="Mizuno H."/>
            <person name="Mizubayashi T."/>
            <person name="Mukai Y."/>
            <person name="Nagasaki H."/>
            <person name="Nakashima M."/>
            <person name="Nakama Y."/>
            <person name="Nakamichi Y."/>
            <person name="Nakamura M."/>
            <person name="Namiki N."/>
            <person name="Negishi M."/>
            <person name="Ohta I."/>
            <person name="Ono N."/>
            <person name="Saji S."/>
            <person name="Sakai K."/>
            <person name="Shibata M."/>
            <person name="Shimokawa T."/>
            <person name="Shomura A."/>
            <person name="Song J."/>
            <person name="Takazaki Y."/>
            <person name="Terasawa K."/>
            <person name="Tsuji K."/>
            <person name="Waki K."/>
            <person name="Yamagata H."/>
            <person name="Yamane H."/>
            <person name="Yoshiki S."/>
            <person name="Yoshihara R."/>
            <person name="Yukawa K."/>
            <person name="Zhong H."/>
            <person name="Iwama H."/>
            <person name="Endo T."/>
            <person name="Ito H."/>
            <person name="Hahn J.H."/>
            <person name="Kim H.-I."/>
            <person name="Eun M.-Y."/>
            <person name="Yano M."/>
            <person name="Jiang J."/>
            <person name="Gojobori T."/>
        </authorList>
    </citation>
    <scope>NUCLEOTIDE SEQUENCE [LARGE SCALE GENOMIC DNA]</scope>
    <source>
        <strain>cv. Nipponbare</strain>
    </source>
</reference>
<reference key="2">
    <citation type="journal article" date="2005" name="Nature">
        <title>The map-based sequence of the rice genome.</title>
        <authorList>
            <consortium name="International rice genome sequencing project (IRGSP)"/>
        </authorList>
    </citation>
    <scope>NUCLEOTIDE SEQUENCE [LARGE SCALE GENOMIC DNA]</scope>
    <source>
        <strain>cv. Nipponbare</strain>
    </source>
</reference>
<reference key="3">
    <citation type="journal article" date="2008" name="Nucleic Acids Res.">
        <title>The rice annotation project database (RAP-DB): 2008 update.</title>
        <authorList>
            <consortium name="The rice annotation project (RAP)"/>
        </authorList>
    </citation>
    <scope>GENOME REANNOTATION</scope>
    <source>
        <strain>cv. Nipponbare</strain>
    </source>
</reference>
<reference key="4">
    <citation type="journal article" date="2013" name="Rice">
        <title>Improvement of the Oryza sativa Nipponbare reference genome using next generation sequence and optical map data.</title>
        <authorList>
            <person name="Kawahara Y."/>
            <person name="de la Bastide M."/>
            <person name="Hamilton J.P."/>
            <person name="Kanamori H."/>
            <person name="McCombie W.R."/>
            <person name="Ouyang S."/>
            <person name="Schwartz D.C."/>
            <person name="Tanaka T."/>
            <person name="Wu J."/>
            <person name="Zhou S."/>
            <person name="Childs K.L."/>
            <person name="Davidson R.M."/>
            <person name="Lin H."/>
            <person name="Quesada-Ocampo L."/>
            <person name="Vaillancourt B."/>
            <person name="Sakai H."/>
            <person name="Lee S.S."/>
            <person name="Kim J."/>
            <person name="Numa H."/>
            <person name="Itoh T."/>
            <person name="Buell C.R."/>
            <person name="Matsumoto T."/>
        </authorList>
    </citation>
    <scope>GENOME REANNOTATION</scope>
    <source>
        <strain>cv. Nipponbare</strain>
    </source>
</reference>
<reference key="5">
    <citation type="journal article" date="2005" name="PLoS Biol.">
        <title>The genomes of Oryza sativa: a history of duplications.</title>
        <authorList>
            <person name="Yu J."/>
            <person name="Wang J."/>
            <person name="Lin W."/>
            <person name="Li S."/>
            <person name="Li H."/>
            <person name="Zhou J."/>
            <person name="Ni P."/>
            <person name="Dong W."/>
            <person name="Hu S."/>
            <person name="Zeng C."/>
            <person name="Zhang J."/>
            <person name="Zhang Y."/>
            <person name="Li R."/>
            <person name="Xu Z."/>
            <person name="Li S."/>
            <person name="Li X."/>
            <person name="Zheng H."/>
            <person name="Cong L."/>
            <person name="Lin L."/>
            <person name="Yin J."/>
            <person name="Geng J."/>
            <person name="Li G."/>
            <person name="Shi J."/>
            <person name="Liu J."/>
            <person name="Lv H."/>
            <person name="Li J."/>
            <person name="Wang J."/>
            <person name="Deng Y."/>
            <person name="Ran L."/>
            <person name="Shi X."/>
            <person name="Wang X."/>
            <person name="Wu Q."/>
            <person name="Li C."/>
            <person name="Ren X."/>
            <person name="Wang J."/>
            <person name="Wang X."/>
            <person name="Li D."/>
            <person name="Liu D."/>
            <person name="Zhang X."/>
            <person name="Ji Z."/>
            <person name="Zhao W."/>
            <person name="Sun Y."/>
            <person name="Zhang Z."/>
            <person name="Bao J."/>
            <person name="Han Y."/>
            <person name="Dong L."/>
            <person name="Ji J."/>
            <person name="Chen P."/>
            <person name="Wu S."/>
            <person name="Liu J."/>
            <person name="Xiao Y."/>
            <person name="Bu D."/>
            <person name="Tan J."/>
            <person name="Yang L."/>
            <person name="Ye C."/>
            <person name="Zhang J."/>
            <person name="Xu J."/>
            <person name="Zhou Y."/>
            <person name="Yu Y."/>
            <person name="Zhang B."/>
            <person name="Zhuang S."/>
            <person name="Wei H."/>
            <person name="Liu B."/>
            <person name="Lei M."/>
            <person name="Yu H."/>
            <person name="Li Y."/>
            <person name="Xu H."/>
            <person name="Wei S."/>
            <person name="He X."/>
            <person name="Fang L."/>
            <person name="Zhang Z."/>
            <person name="Zhang Y."/>
            <person name="Huang X."/>
            <person name="Su Z."/>
            <person name="Tong W."/>
            <person name="Li J."/>
            <person name="Tong Z."/>
            <person name="Li S."/>
            <person name="Ye J."/>
            <person name="Wang L."/>
            <person name="Fang L."/>
            <person name="Lei T."/>
            <person name="Chen C.-S."/>
            <person name="Chen H.-C."/>
            <person name="Xu Z."/>
            <person name="Li H."/>
            <person name="Huang H."/>
            <person name="Zhang F."/>
            <person name="Xu H."/>
            <person name="Li N."/>
            <person name="Zhao C."/>
            <person name="Li S."/>
            <person name="Dong L."/>
            <person name="Huang Y."/>
            <person name="Li L."/>
            <person name="Xi Y."/>
            <person name="Qi Q."/>
            <person name="Li W."/>
            <person name="Zhang B."/>
            <person name="Hu W."/>
            <person name="Zhang Y."/>
            <person name="Tian X."/>
            <person name="Jiao Y."/>
            <person name="Liang X."/>
            <person name="Jin J."/>
            <person name="Gao L."/>
            <person name="Zheng W."/>
            <person name="Hao B."/>
            <person name="Liu S.-M."/>
            <person name="Wang W."/>
            <person name="Yuan L."/>
            <person name="Cao M."/>
            <person name="McDermott J."/>
            <person name="Samudrala R."/>
            <person name="Wang J."/>
            <person name="Wong G.K.-S."/>
            <person name="Yang H."/>
        </authorList>
    </citation>
    <scope>NUCLEOTIDE SEQUENCE [LARGE SCALE GENOMIC DNA]</scope>
    <source>
        <strain>cv. Nipponbare</strain>
    </source>
</reference>
<reference key="6">
    <citation type="journal article" date="2003" name="Science">
        <title>Collection, mapping, and annotation of over 28,000 cDNA clones from japonica rice.</title>
        <authorList>
            <consortium name="The rice full-length cDNA consortium"/>
        </authorList>
    </citation>
    <scope>NUCLEOTIDE SEQUENCE [LARGE SCALE MRNA]</scope>
    <source>
        <strain>cv. Nipponbare</strain>
    </source>
</reference>
<reference key="7">
    <citation type="journal article" date="2004" name="Plant Biotechnol.">
        <title>Two proton pump interactors identified from a direct phosphorylation screening of a rice cDNA library by using a recombinant BRI1 receptor kinase.</title>
        <authorList>
            <person name="Hirabayashi S."/>
            <person name="Matsushita Y."/>
            <person name="Sato M."/>
            <person name="Ohi R."/>
            <person name="Kasahara M."/>
            <person name="Abe H."/>
            <person name="Nyunoya H."/>
        </authorList>
    </citation>
    <scope>NUCLEOTIDE SEQUENCE [MRNA] OF 502-647</scope>
    <scope>PHOSPHORYLATION</scope>
    <scope>INTERACTION WITH BRI1</scope>
    <source>
        <strain>cv. Nipponbare</strain>
        <tissue>Seedling</tissue>
    </source>
</reference>
<evidence type="ECO:0000255" key="1"/>
<evidence type="ECO:0000255" key="2">
    <source>
        <dbReference type="PROSITE-ProRule" id="PRU00541"/>
    </source>
</evidence>
<evidence type="ECO:0000255" key="3">
    <source>
        <dbReference type="PROSITE-ProRule" id="PRU00542"/>
    </source>
</evidence>
<evidence type="ECO:0000256" key="4">
    <source>
        <dbReference type="SAM" id="MobiDB-lite"/>
    </source>
</evidence>
<evidence type="ECO:0000269" key="5">
    <source ref="7"/>
</evidence>
<evidence type="ECO:0000305" key="6"/>
<evidence type="ECO:0000305" key="7">
    <source ref="7"/>
</evidence>
<keyword id="KW-0067">ATP-binding</keyword>
<keyword id="KW-0175">Coiled coil</keyword>
<keyword id="KW-0347">Helicase</keyword>
<keyword id="KW-0378">Hydrolase</keyword>
<keyword id="KW-0547">Nucleotide-binding</keyword>
<keyword id="KW-0597">Phosphoprotein</keyword>
<keyword id="KW-1185">Reference proteome</keyword>
<keyword id="KW-0694">RNA-binding</keyword>
<accession>Q761Z9</accession>
<accession>B7EFB7</accession>
<accession>Q942Q0</accession>
<gene>
    <name type="ordered locus">Os01g0164500</name>
    <name type="ordered locus">LOC_Os01g07080</name>
    <name type="ORF">B1189A09.47</name>
    <name type="ORF">OsJ_00495</name>
    <name type="ORF">P0701D05.2</name>
</gene>
<comment type="catalytic activity">
    <reaction>
        <text>ATP + H2O = ADP + phosphate + H(+)</text>
        <dbReference type="Rhea" id="RHEA:13065"/>
        <dbReference type="ChEBI" id="CHEBI:15377"/>
        <dbReference type="ChEBI" id="CHEBI:15378"/>
        <dbReference type="ChEBI" id="CHEBI:30616"/>
        <dbReference type="ChEBI" id="CHEBI:43474"/>
        <dbReference type="ChEBI" id="CHEBI:456216"/>
        <dbReference type="EC" id="3.6.4.13"/>
    </reaction>
</comment>
<comment type="subunit">
    <text evidence="5">Interacts with BRI1.</text>
</comment>
<comment type="domain">
    <text>The Q motif is unique to and characteristic of the DEAD box family of RNA helicases and controls ATP binding and hydrolysis.</text>
</comment>
<comment type="PTM">
    <text evidence="7">Phosphorylated.</text>
</comment>
<comment type="similarity">
    <text evidence="6">Belongs to the DEAD box helicase family. DDX55/SPB4 subfamily.</text>
</comment>
<protein>
    <recommendedName>
        <fullName>DEAD-box ATP-dependent RNA helicase 18</fullName>
        <ecNumber>3.6.4.13</ecNumber>
    </recommendedName>
    <alternativeName>
        <fullName>BRI1-KD-interacting protein 115</fullName>
        <shortName>BIP115</shortName>
    </alternativeName>
</protein>